<protein>
    <recommendedName>
        <fullName evidence="1">Integration host factor subunit beta</fullName>
        <shortName evidence="1">IHF-beta</shortName>
    </recommendedName>
</protein>
<feature type="chain" id="PRO_1000060643" description="Integration host factor subunit beta">
    <location>
        <begin position="1"/>
        <end position="102"/>
    </location>
</feature>
<organism>
    <name type="scientific">Rhodopseudomonas palustris (strain BisA53)</name>
    <dbReference type="NCBI Taxonomy" id="316055"/>
    <lineage>
        <taxon>Bacteria</taxon>
        <taxon>Pseudomonadati</taxon>
        <taxon>Pseudomonadota</taxon>
        <taxon>Alphaproteobacteria</taxon>
        <taxon>Hyphomicrobiales</taxon>
        <taxon>Nitrobacteraceae</taxon>
        <taxon>Rhodopseudomonas</taxon>
    </lineage>
</organism>
<name>IHFB_RHOP5</name>
<evidence type="ECO:0000255" key="1">
    <source>
        <dbReference type="HAMAP-Rule" id="MF_00381"/>
    </source>
</evidence>
<accession>Q07UH4</accession>
<reference key="1">
    <citation type="submission" date="2006-09" db="EMBL/GenBank/DDBJ databases">
        <title>Complete sequence of Rhodopseudomonas palustris BisA53.</title>
        <authorList>
            <consortium name="US DOE Joint Genome Institute"/>
            <person name="Copeland A."/>
            <person name="Lucas S."/>
            <person name="Lapidus A."/>
            <person name="Barry K."/>
            <person name="Detter J.C."/>
            <person name="Glavina del Rio T."/>
            <person name="Hammon N."/>
            <person name="Israni S."/>
            <person name="Dalin E."/>
            <person name="Tice H."/>
            <person name="Pitluck S."/>
            <person name="Chain P."/>
            <person name="Malfatti S."/>
            <person name="Shin M."/>
            <person name="Vergez L."/>
            <person name="Schmutz J."/>
            <person name="Larimer F."/>
            <person name="Land M."/>
            <person name="Hauser L."/>
            <person name="Pelletier D.A."/>
            <person name="Kyrpides N."/>
            <person name="Kim E."/>
            <person name="Harwood C.S."/>
            <person name="Oda Y."/>
            <person name="Richardson P."/>
        </authorList>
    </citation>
    <scope>NUCLEOTIDE SEQUENCE [LARGE SCALE GENOMIC DNA]</scope>
    <source>
        <strain>BisA53</strain>
    </source>
</reference>
<sequence length="102" mass="11485">MIKSELVQRIAEHNPHLYQRDVENIVNAILEEIVAALARGDRVELRGFGAFSVKHRPARAGRNPRTGEHVPVEQKSVPFFKTGKEMRERLNRDNGISAETGA</sequence>
<proteinExistence type="inferred from homology"/>
<gene>
    <name evidence="1" type="primary">ihfB</name>
    <name evidence="1" type="synonym">himD</name>
    <name type="ordered locus">RPE_0451</name>
</gene>
<comment type="function">
    <text evidence="1">This protein is one of the two subunits of integration host factor, a specific DNA-binding protein that functions in genetic recombination as well as in transcriptional and translational control.</text>
</comment>
<comment type="subunit">
    <text evidence="1">Heterodimer of an alpha and a beta chain.</text>
</comment>
<comment type="similarity">
    <text evidence="1">Belongs to the bacterial histone-like protein family.</text>
</comment>
<dbReference type="EMBL" id="CP000463">
    <property type="protein sequence ID" value="ABJ04410.1"/>
    <property type="molecule type" value="Genomic_DNA"/>
</dbReference>
<dbReference type="SMR" id="Q07UH4"/>
<dbReference type="STRING" id="316055.RPE_0451"/>
<dbReference type="KEGG" id="rpe:RPE_0451"/>
<dbReference type="eggNOG" id="COG0776">
    <property type="taxonomic scope" value="Bacteria"/>
</dbReference>
<dbReference type="HOGENOM" id="CLU_105066_2_0_5"/>
<dbReference type="OrthoDB" id="9804203at2"/>
<dbReference type="GO" id="GO:0005694">
    <property type="term" value="C:chromosome"/>
    <property type="evidence" value="ECO:0007669"/>
    <property type="project" value="InterPro"/>
</dbReference>
<dbReference type="GO" id="GO:0005829">
    <property type="term" value="C:cytosol"/>
    <property type="evidence" value="ECO:0007669"/>
    <property type="project" value="TreeGrafter"/>
</dbReference>
<dbReference type="GO" id="GO:0003677">
    <property type="term" value="F:DNA binding"/>
    <property type="evidence" value="ECO:0007669"/>
    <property type="project" value="UniProtKB-UniRule"/>
</dbReference>
<dbReference type="GO" id="GO:0030527">
    <property type="term" value="F:structural constituent of chromatin"/>
    <property type="evidence" value="ECO:0007669"/>
    <property type="project" value="InterPro"/>
</dbReference>
<dbReference type="GO" id="GO:0006310">
    <property type="term" value="P:DNA recombination"/>
    <property type="evidence" value="ECO:0007669"/>
    <property type="project" value="UniProtKB-UniRule"/>
</dbReference>
<dbReference type="GO" id="GO:0006355">
    <property type="term" value="P:regulation of DNA-templated transcription"/>
    <property type="evidence" value="ECO:0007669"/>
    <property type="project" value="UniProtKB-UniRule"/>
</dbReference>
<dbReference type="GO" id="GO:0006417">
    <property type="term" value="P:regulation of translation"/>
    <property type="evidence" value="ECO:0007669"/>
    <property type="project" value="UniProtKB-UniRule"/>
</dbReference>
<dbReference type="CDD" id="cd13836">
    <property type="entry name" value="IHF_B"/>
    <property type="match status" value="1"/>
</dbReference>
<dbReference type="FunFam" id="4.10.520.10:FF:000008">
    <property type="entry name" value="Integration host factor subunit beta"/>
    <property type="match status" value="1"/>
</dbReference>
<dbReference type="Gene3D" id="4.10.520.10">
    <property type="entry name" value="IHF-like DNA-binding proteins"/>
    <property type="match status" value="1"/>
</dbReference>
<dbReference type="HAMAP" id="MF_00381">
    <property type="entry name" value="IHF_beta"/>
    <property type="match status" value="1"/>
</dbReference>
<dbReference type="InterPro" id="IPR000119">
    <property type="entry name" value="Hist_DNA-bd"/>
</dbReference>
<dbReference type="InterPro" id="IPR020816">
    <property type="entry name" value="Histone-like_DNA-bd_CS"/>
</dbReference>
<dbReference type="InterPro" id="IPR010992">
    <property type="entry name" value="IHF-like_DNA-bd_dom_sf"/>
</dbReference>
<dbReference type="InterPro" id="IPR005685">
    <property type="entry name" value="IHF_beta"/>
</dbReference>
<dbReference type="NCBIfam" id="TIGR00988">
    <property type="entry name" value="hip"/>
    <property type="match status" value="1"/>
</dbReference>
<dbReference type="NCBIfam" id="NF001222">
    <property type="entry name" value="PRK00199.1"/>
    <property type="match status" value="1"/>
</dbReference>
<dbReference type="PANTHER" id="PTHR33175">
    <property type="entry name" value="DNA-BINDING PROTEIN HU"/>
    <property type="match status" value="1"/>
</dbReference>
<dbReference type="PANTHER" id="PTHR33175:SF5">
    <property type="entry name" value="INTEGRATION HOST FACTOR SUBUNIT BETA"/>
    <property type="match status" value="1"/>
</dbReference>
<dbReference type="Pfam" id="PF00216">
    <property type="entry name" value="Bac_DNA_binding"/>
    <property type="match status" value="1"/>
</dbReference>
<dbReference type="PRINTS" id="PR01727">
    <property type="entry name" value="DNABINDINGHU"/>
</dbReference>
<dbReference type="SMART" id="SM00411">
    <property type="entry name" value="BHL"/>
    <property type="match status" value="1"/>
</dbReference>
<dbReference type="SUPFAM" id="SSF47729">
    <property type="entry name" value="IHF-like DNA-binding proteins"/>
    <property type="match status" value="1"/>
</dbReference>
<dbReference type="PROSITE" id="PS00045">
    <property type="entry name" value="HISTONE_LIKE"/>
    <property type="match status" value="1"/>
</dbReference>
<keyword id="KW-0233">DNA recombination</keyword>
<keyword id="KW-0238">DNA-binding</keyword>
<keyword id="KW-0804">Transcription</keyword>
<keyword id="KW-0805">Transcription regulation</keyword>
<keyword id="KW-0810">Translation regulation</keyword>